<sequence>MYLANFELKDFRNFKELKTDFDPHVNIFIGPNAQGKTNLLEAIYFLALTRSHRTNSDKELIRFGSKFAGLQGRVHKSQLQVELKLRLTANGKKAWVNRLEQKKLSAYVGQMNAILFSPEDLALVKGAPSVRRRFMDLEFGQINSEYLYFSSQYRQVLQQRNNYLKQLSIKKANDQVFLDVLSDQLAGIAAEIISRRIKYIKKLNSYAKAAHSEISGQAEKLQIFYRPSVKEIIPEDNVETIYRKVITSYKKNRPNEIRKGTTLSGPHRDDLEFLINEKNAHDFASQGQQRTISLSVKLAEIQLVHELTQEYPILLLDDVMSELDHRRQSRLLNYIHGKTQTFITTTDLEGISWEIVKEPKVYHISAGTISAKES</sequence>
<gene>
    <name evidence="1" type="primary">recF</name>
    <name type="ordered locus">LGAS_0004</name>
</gene>
<protein>
    <recommendedName>
        <fullName evidence="1">DNA replication and repair protein RecF</fullName>
    </recommendedName>
</protein>
<dbReference type="EMBL" id="CP000413">
    <property type="protein sequence ID" value="ABJ59421.1"/>
    <property type="molecule type" value="Genomic_DNA"/>
</dbReference>
<dbReference type="RefSeq" id="WP_003648138.1">
    <property type="nucleotide sequence ID" value="NZ_WBMG01000006.1"/>
</dbReference>
<dbReference type="SMR" id="Q047F1"/>
<dbReference type="GeneID" id="29639356"/>
<dbReference type="KEGG" id="lga:LGAS_0004"/>
<dbReference type="HOGENOM" id="CLU_040267_0_1_9"/>
<dbReference type="BioCyc" id="LGAS324831:G1G6Y-4-MONOMER"/>
<dbReference type="Proteomes" id="UP000000664">
    <property type="component" value="Chromosome"/>
</dbReference>
<dbReference type="GO" id="GO:0005737">
    <property type="term" value="C:cytoplasm"/>
    <property type="evidence" value="ECO:0007669"/>
    <property type="project" value="UniProtKB-SubCell"/>
</dbReference>
<dbReference type="GO" id="GO:0005524">
    <property type="term" value="F:ATP binding"/>
    <property type="evidence" value="ECO:0007669"/>
    <property type="project" value="UniProtKB-UniRule"/>
</dbReference>
<dbReference type="GO" id="GO:0003697">
    <property type="term" value="F:single-stranded DNA binding"/>
    <property type="evidence" value="ECO:0007669"/>
    <property type="project" value="UniProtKB-UniRule"/>
</dbReference>
<dbReference type="GO" id="GO:0006260">
    <property type="term" value="P:DNA replication"/>
    <property type="evidence" value="ECO:0007669"/>
    <property type="project" value="UniProtKB-UniRule"/>
</dbReference>
<dbReference type="GO" id="GO:0000731">
    <property type="term" value="P:DNA synthesis involved in DNA repair"/>
    <property type="evidence" value="ECO:0007669"/>
    <property type="project" value="TreeGrafter"/>
</dbReference>
<dbReference type="GO" id="GO:0006302">
    <property type="term" value="P:double-strand break repair"/>
    <property type="evidence" value="ECO:0007669"/>
    <property type="project" value="TreeGrafter"/>
</dbReference>
<dbReference type="GO" id="GO:0009432">
    <property type="term" value="P:SOS response"/>
    <property type="evidence" value="ECO:0007669"/>
    <property type="project" value="UniProtKB-UniRule"/>
</dbReference>
<dbReference type="CDD" id="cd03242">
    <property type="entry name" value="ABC_RecF"/>
    <property type="match status" value="1"/>
</dbReference>
<dbReference type="Gene3D" id="3.40.50.300">
    <property type="entry name" value="P-loop containing nucleotide triphosphate hydrolases"/>
    <property type="match status" value="1"/>
</dbReference>
<dbReference type="Gene3D" id="1.20.1050.90">
    <property type="entry name" value="RecF/RecN/SMC, N-terminal domain"/>
    <property type="match status" value="1"/>
</dbReference>
<dbReference type="HAMAP" id="MF_00365">
    <property type="entry name" value="RecF"/>
    <property type="match status" value="1"/>
</dbReference>
<dbReference type="InterPro" id="IPR001238">
    <property type="entry name" value="DNA-binding_RecF"/>
</dbReference>
<dbReference type="InterPro" id="IPR018078">
    <property type="entry name" value="DNA-binding_RecF_CS"/>
</dbReference>
<dbReference type="InterPro" id="IPR027417">
    <property type="entry name" value="P-loop_NTPase"/>
</dbReference>
<dbReference type="InterPro" id="IPR003395">
    <property type="entry name" value="RecF/RecN/SMC_N"/>
</dbReference>
<dbReference type="InterPro" id="IPR042174">
    <property type="entry name" value="RecF_2"/>
</dbReference>
<dbReference type="NCBIfam" id="TIGR00611">
    <property type="entry name" value="recf"/>
    <property type="match status" value="1"/>
</dbReference>
<dbReference type="PANTHER" id="PTHR32182">
    <property type="entry name" value="DNA REPLICATION AND REPAIR PROTEIN RECF"/>
    <property type="match status" value="1"/>
</dbReference>
<dbReference type="PANTHER" id="PTHR32182:SF0">
    <property type="entry name" value="DNA REPLICATION AND REPAIR PROTEIN RECF"/>
    <property type="match status" value="1"/>
</dbReference>
<dbReference type="Pfam" id="PF02463">
    <property type="entry name" value="SMC_N"/>
    <property type="match status" value="1"/>
</dbReference>
<dbReference type="SUPFAM" id="SSF52540">
    <property type="entry name" value="P-loop containing nucleoside triphosphate hydrolases"/>
    <property type="match status" value="1"/>
</dbReference>
<dbReference type="PROSITE" id="PS00617">
    <property type="entry name" value="RECF_1"/>
    <property type="match status" value="1"/>
</dbReference>
<dbReference type="PROSITE" id="PS00618">
    <property type="entry name" value="RECF_2"/>
    <property type="match status" value="1"/>
</dbReference>
<organism>
    <name type="scientific">Lactobacillus gasseri (strain ATCC 33323 / DSM 20243 / BCRC 14619 / CIP 102991 / JCM 1131 / KCTC 3163 / NCIMB 11718 / NCTC 13722 / AM63)</name>
    <dbReference type="NCBI Taxonomy" id="324831"/>
    <lineage>
        <taxon>Bacteria</taxon>
        <taxon>Bacillati</taxon>
        <taxon>Bacillota</taxon>
        <taxon>Bacilli</taxon>
        <taxon>Lactobacillales</taxon>
        <taxon>Lactobacillaceae</taxon>
        <taxon>Lactobacillus</taxon>
    </lineage>
</organism>
<evidence type="ECO:0000255" key="1">
    <source>
        <dbReference type="HAMAP-Rule" id="MF_00365"/>
    </source>
</evidence>
<feature type="chain" id="PRO_1000048533" description="DNA replication and repair protein RecF">
    <location>
        <begin position="1"/>
        <end position="374"/>
    </location>
</feature>
<feature type="binding site" evidence="1">
    <location>
        <begin position="30"/>
        <end position="37"/>
    </location>
    <ligand>
        <name>ATP</name>
        <dbReference type="ChEBI" id="CHEBI:30616"/>
    </ligand>
</feature>
<keyword id="KW-0067">ATP-binding</keyword>
<keyword id="KW-0963">Cytoplasm</keyword>
<keyword id="KW-0227">DNA damage</keyword>
<keyword id="KW-0234">DNA repair</keyword>
<keyword id="KW-0235">DNA replication</keyword>
<keyword id="KW-0238">DNA-binding</keyword>
<keyword id="KW-0547">Nucleotide-binding</keyword>
<keyword id="KW-0742">SOS response</keyword>
<proteinExistence type="inferred from homology"/>
<comment type="function">
    <text evidence="1">The RecF protein is involved in DNA metabolism; it is required for DNA replication and normal SOS inducibility. RecF binds preferentially to single-stranded, linear DNA. It also seems to bind ATP.</text>
</comment>
<comment type="subcellular location">
    <subcellularLocation>
        <location evidence="1">Cytoplasm</location>
    </subcellularLocation>
</comment>
<comment type="similarity">
    <text evidence="1">Belongs to the RecF family.</text>
</comment>
<accession>Q047F1</accession>
<reference key="1">
    <citation type="journal article" date="2006" name="Proc. Natl. Acad. Sci. U.S.A.">
        <title>Comparative genomics of the lactic acid bacteria.</title>
        <authorList>
            <person name="Makarova K.S."/>
            <person name="Slesarev A."/>
            <person name="Wolf Y.I."/>
            <person name="Sorokin A."/>
            <person name="Mirkin B."/>
            <person name="Koonin E.V."/>
            <person name="Pavlov A."/>
            <person name="Pavlova N."/>
            <person name="Karamychev V."/>
            <person name="Polouchine N."/>
            <person name="Shakhova V."/>
            <person name="Grigoriev I."/>
            <person name="Lou Y."/>
            <person name="Rohksar D."/>
            <person name="Lucas S."/>
            <person name="Huang K."/>
            <person name="Goodstein D.M."/>
            <person name="Hawkins T."/>
            <person name="Plengvidhya V."/>
            <person name="Welker D."/>
            <person name="Hughes J."/>
            <person name="Goh Y."/>
            <person name="Benson A."/>
            <person name="Baldwin K."/>
            <person name="Lee J.-H."/>
            <person name="Diaz-Muniz I."/>
            <person name="Dosti B."/>
            <person name="Smeianov V."/>
            <person name="Wechter W."/>
            <person name="Barabote R."/>
            <person name="Lorca G."/>
            <person name="Altermann E."/>
            <person name="Barrangou R."/>
            <person name="Ganesan B."/>
            <person name="Xie Y."/>
            <person name="Rawsthorne H."/>
            <person name="Tamir D."/>
            <person name="Parker C."/>
            <person name="Breidt F."/>
            <person name="Broadbent J.R."/>
            <person name="Hutkins R."/>
            <person name="O'Sullivan D."/>
            <person name="Steele J."/>
            <person name="Unlu G."/>
            <person name="Saier M.H. Jr."/>
            <person name="Klaenhammer T."/>
            <person name="Richardson P."/>
            <person name="Kozyavkin S."/>
            <person name="Weimer B.C."/>
            <person name="Mills D.A."/>
        </authorList>
    </citation>
    <scope>NUCLEOTIDE SEQUENCE [LARGE SCALE GENOMIC DNA]</scope>
    <source>
        <strain>ATCC 33323 / DSM 20243 / BCRC 14619 / CIP 102991 / JCM 1131 / KCTC 3163 / NCIMB 11718 / NCTC 13722 / AM63</strain>
    </source>
</reference>
<name>RECF_LACGA</name>